<proteinExistence type="inferred from homology"/>
<keyword id="KW-0028">Amino-acid biosynthesis</keyword>
<keyword id="KW-0057">Aromatic amino acid biosynthesis</keyword>
<keyword id="KW-0328">Glycosyltransferase</keyword>
<keyword id="KW-0460">Magnesium</keyword>
<keyword id="KW-0479">Metal-binding</keyword>
<keyword id="KW-0808">Transferase</keyword>
<keyword id="KW-0822">Tryptophan biosynthesis</keyword>
<dbReference type="EC" id="2.4.2.18" evidence="1"/>
<dbReference type="EMBL" id="CP001488">
    <property type="protein sequence ID" value="ACO00918.1"/>
    <property type="molecule type" value="Genomic_DNA"/>
</dbReference>
<dbReference type="RefSeq" id="WP_002969119.1">
    <property type="nucleotide sequence ID" value="NC_012441.1"/>
</dbReference>
<dbReference type="SMR" id="C0RJB0"/>
<dbReference type="GeneID" id="93016524"/>
<dbReference type="KEGG" id="bmi:BMEA_A1184"/>
<dbReference type="HOGENOM" id="CLU_034315_2_1_5"/>
<dbReference type="UniPathway" id="UPA00035">
    <property type="reaction ID" value="UER00041"/>
</dbReference>
<dbReference type="Proteomes" id="UP000001748">
    <property type="component" value="Chromosome I"/>
</dbReference>
<dbReference type="GO" id="GO:0005829">
    <property type="term" value="C:cytosol"/>
    <property type="evidence" value="ECO:0007669"/>
    <property type="project" value="TreeGrafter"/>
</dbReference>
<dbReference type="GO" id="GO:0004048">
    <property type="term" value="F:anthranilate phosphoribosyltransferase activity"/>
    <property type="evidence" value="ECO:0007669"/>
    <property type="project" value="UniProtKB-UniRule"/>
</dbReference>
<dbReference type="GO" id="GO:0000287">
    <property type="term" value="F:magnesium ion binding"/>
    <property type="evidence" value="ECO:0007669"/>
    <property type="project" value="UniProtKB-UniRule"/>
</dbReference>
<dbReference type="GO" id="GO:0000162">
    <property type="term" value="P:L-tryptophan biosynthetic process"/>
    <property type="evidence" value="ECO:0007669"/>
    <property type="project" value="UniProtKB-UniRule"/>
</dbReference>
<dbReference type="FunFam" id="3.40.1030.10:FF:000002">
    <property type="entry name" value="Anthranilate phosphoribosyltransferase"/>
    <property type="match status" value="1"/>
</dbReference>
<dbReference type="Gene3D" id="3.40.1030.10">
    <property type="entry name" value="Nucleoside phosphorylase/phosphoribosyltransferase catalytic domain"/>
    <property type="match status" value="1"/>
</dbReference>
<dbReference type="Gene3D" id="1.20.970.10">
    <property type="entry name" value="Transferase, Pyrimidine Nucleoside Phosphorylase, Chain C"/>
    <property type="match status" value="1"/>
</dbReference>
<dbReference type="HAMAP" id="MF_00211">
    <property type="entry name" value="TrpD"/>
    <property type="match status" value="1"/>
</dbReference>
<dbReference type="InterPro" id="IPR005940">
    <property type="entry name" value="Anthranilate_Pribosyl_Tfrase"/>
</dbReference>
<dbReference type="InterPro" id="IPR000312">
    <property type="entry name" value="Glycosyl_Trfase_fam3"/>
</dbReference>
<dbReference type="InterPro" id="IPR017459">
    <property type="entry name" value="Glycosyl_Trfase_fam3_N_dom"/>
</dbReference>
<dbReference type="InterPro" id="IPR036320">
    <property type="entry name" value="Glycosyl_Trfase_fam3_N_dom_sf"/>
</dbReference>
<dbReference type="InterPro" id="IPR035902">
    <property type="entry name" value="Nuc_phospho_transferase"/>
</dbReference>
<dbReference type="NCBIfam" id="TIGR01245">
    <property type="entry name" value="trpD"/>
    <property type="match status" value="1"/>
</dbReference>
<dbReference type="PANTHER" id="PTHR43285">
    <property type="entry name" value="ANTHRANILATE PHOSPHORIBOSYLTRANSFERASE"/>
    <property type="match status" value="1"/>
</dbReference>
<dbReference type="PANTHER" id="PTHR43285:SF2">
    <property type="entry name" value="ANTHRANILATE PHOSPHORIBOSYLTRANSFERASE"/>
    <property type="match status" value="1"/>
</dbReference>
<dbReference type="Pfam" id="PF02885">
    <property type="entry name" value="Glycos_trans_3N"/>
    <property type="match status" value="1"/>
</dbReference>
<dbReference type="Pfam" id="PF00591">
    <property type="entry name" value="Glycos_transf_3"/>
    <property type="match status" value="1"/>
</dbReference>
<dbReference type="SUPFAM" id="SSF52418">
    <property type="entry name" value="Nucleoside phosphorylase/phosphoribosyltransferase catalytic domain"/>
    <property type="match status" value="1"/>
</dbReference>
<dbReference type="SUPFAM" id="SSF47648">
    <property type="entry name" value="Nucleoside phosphorylase/phosphoribosyltransferase N-terminal domain"/>
    <property type="match status" value="1"/>
</dbReference>
<evidence type="ECO:0000255" key="1">
    <source>
        <dbReference type="HAMAP-Rule" id="MF_00211"/>
    </source>
</evidence>
<name>TRPD_BRUMB</name>
<gene>
    <name evidence="1" type="primary">trpD</name>
    <name type="ordered locus">BMEA_A1184</name>
</gene>
<sequence length="339" mass="34839">MADLKPYIAKAASGEPLPLGDAKAAFDIMMSGQATPSQIGGFLMALRVRGETVPEIAGAVASMRSRMIPVIAPDDAMDIVGTGGDQSGSYNVSSCTAFVVAGAGVPVAKHGNRALSSRSGAADALAALGINIEADADTIGRSISEAGLGFMFAPMHHSAMRHVGPSRVELGTRTIFNLLGPLSNPASVKRQLVGVFAPQWLEPLAHVLKELGSETAWVVYGDGLDEMTTAGTTQVAALENGQIRTFEITPEEVGLRRCSPAELKGGEAAENAKALLGVLEGKDSAYRDIVLLNSGAALVVAGKAENLKDGIAQAVQSIDSGAALAVLQKVIAVSNDKPA</sequence>
<reference key="1">
    <citation type="submission" date="2009-03" db="EMBL/GenBank/DDBJ databases">
        <title>Brucella melitensis ATCC 23457 whole genome shotgun sequencing project.</title>
        <authorList>
            <person name="Setubal J.C."/>
            <person name="Boyle S."/>
            <person name="Crasta O.R."/>
            <person name="Gillespie J.J."/>
            <person name="Kenyon R.W."/>
            <person name="Lu J."/>
            <person name="Mane S."/>
            <person name="Nagrani S."/>
            <person name="Shallom J.M."/>
            <person name="Shallom S."/>
            <person name="Shukla M."/>
            <person name="Snyder E.E."/>
            <person name="Sobral B.W."/>
            <person name="Wattam A.R."/>
            <person name="Will R."/>
            <person name="Williams K."/>
            <person name="Yoo H."/>
            <person name="Munk C."/>
            <person name="Tapia R."/>
            <person name="Han C."/>
            <person name="Detter J.C."/>
            <person name="Bruce D."/>
            <person name="Brettin T.S."/>
        </authorList>
    </citation>
    <scope>NUCLEOTIDE SEQUENCE [LARGE SCALE GENOMIC DNA]</scope>
    <source>
        <strain>ATCC 23457</strain>
    </source>
</reference>
<comment type="function">
    <text evidence="1">Catalyzes the transfer of the phosphoribosyl group of 5-phosphorylribose-1-pyrophosphate (PRPP) to anthranilate to yield N-(5'-phosphoribosyl)-anthranilate (PRA).</text>
</comment>
<comment type="catalytic activity">
    <reaction evidence="1">
        <text>N-(5-phospho-beta-D-ribosyl)anthranilate + diphosphate = 5-phospho-alpha-D-ribose 1-diphosphate + anthranilate</text>
        <dbReference type="Rhea" id="RHEA:11768"/>
        <dbReference type="ChEBI" id="CHEBI:16567"/>
        <dbReference type="ChEBI" id="CHEBI:18277"/>
        <dbReference type="ChEBI" id="CHEBI:33019"/>
        <dbReference type="ChEBI" id="CHEBI:58017"/>
        <dbReference type="EC" id="2.4.2.18"/>
    </reaction>
</comment>
<comment type="cofactor">
    <cofactor evidence="1">
        <name>Mg(2+)</name>
        <dbReference type="ChEBI" id="CHEBI:18420"/>
    </cofactor>
    <text evidence="1">Binds 2 magnesium ions per monomer.</text>
</comment>
<comment type="pathway">
    <text evidence="1">Amino-acid biosynthesis; L-tryptophan biosynthesis; L-tryptophan from chorismate: step 2/5.</text>
</comment>
<comment type="subunit">
    <text evidence="1">Homodimer.</text>
</comment>
<comment type="similarity">
    <text evidence="1">Belongs to the anthranilate phosphoribosyltransferase family.</text>
</comment>
<organism>
    <name type="scientific">Brucella melitensis biotype 2 (strain ATCC 23457)</name>
    <dbReference type="NCBI Taxonomy" id="546272"/>
    <lineage>
        <taxon>Bacteria</taxon>
        <taxon>Pseudomonadati</taxon>
        <taxon>Pseudomonadota</taxon>
        <taxon>Alphaproteobacteria</taxon>
        <taxon>Hyphomicrobiales</taxon>
        <taxon>Brucellaceae</taxon>
        <taxon>Brucella/Ochrobactrum group</taxon>
        <taxon>Brucella</taxon>
    </lineage>
</organism>
<feature type="chain" id="PRO_1000198808" description="Anthranilate phosphoribosyltransferase">
    <location>
        <begin position="1"/>
        <end position="339"/>
    </location>
</feature>
<feature type="binding site" evidence="1">
    <location>
        <position position="81"/>
    </location>
    <ligand>
        <name>5-phospho-alpha-D-ribose 1-diphosphate</name>
        <dbReference type="ChEBI" id="CHEBI:58017"/>
    </ligand>
</feature>
<feature type="binding site" evidence="1">
    <location>
        <position position="81"/>
    </location>
    <ligand>
        <name>anthranilate</name>
        <dbReference type="ChEBI" id="CHEBI:16567"/>
        <label>1</label>
    </ligand>
</feature>
<feature type="binding site" evidence="1">
    <location>
        <begin position="84"/>
        <end position="85"/>
    </location>
    <ligand>
        <name>5-phospho-alpha-D-ribose 1-diphosphate</name>
        <dbReference type="ChEBI" id="CHEBI:58017"/>
    </ligand>
</feature>
<feature type="binding site" evidence="1">
    <location>
        <position position="89"/>
    </location>
    <ligand>
        <name>5-phospho-alpha-D-ribose 1-diphosphate</name>
        <dbReference type="ChEBI" id="CHEBI:58017"/>
    </ligand>
</feature>
<feature type="binding site" evidence="1">
    <location>
        <begin position="91"/>
        <end position="94"/>
    </location>
    <ligand>
        <name>5-phospho-alpha-D-ribose 1-diphosphate</name>
        <dbReference type="ChEBI" id="CHEBI:58017"/>
    </ligand>
</feature>
<feature type="binding site" evidence="1">
    <location>
        <position position="93"/>
    </location>
    <ligand>
        <name>Mg(2+)</name>
        <dbReference type="ChEBI" id="CHEBI:18420"/>
        <label>1</label>
    </ligand>
</feature>
<feature type="binding site" evidence="1">
    <location>
        <begin position="109"/>
        <end position="117"/>
    </location>
    <ligand>
        <name>5-phospho-alpha-D-ribose 1-diphosphate</name>
        <dbReference type="ChEBI" id="CHEBI:58017"/>
    </ligand>
</feature>
<feature type="binding site" evidence="1">
    <location>
        <position position="112"/>
    </location>
    <ligand>
        <name>anthranilate</name>
        <dbReference type="ChEBI" id="CHEBI:16567"/>
        <label>1</label>
    </ligand>
</feature>
<feature type="binding site" evidence="1">
    <location>
        <position position="121"/>
    </location>
    <ligand>
        <name>5-phospho-alpha-D-ribose 1-diphosphate</name>
        <dbReference type="ChEBI" id="CHEBI:58017"/>
    </ligand>
</feature>
<feature type="binding site" evidence="1">
    <location>
        <position position="167"/>
    </location>
    <ligand>
        <name>anthranilate</name>
        <dbReference type="ChEBI" id="CHEBI:16567"/>
        <label>2</label>
    </ligand>
</feature>
<feature type="binding site" evidence="1">
    <location>
        <position position="225"/>
    </location>
    <ligand>
        <name>Mg(2+)</name>
        <dbReference type="ChEBI" id="CHEBI:18420"/>
        <label>2</label>
    </ligand>
</feature>
<feature type="binding site" evidence="1">
    <location>
        <position position="226"/>
    </location>
    <ligand>
        <name>Mg(2+)</name>
        <dbReference type="ChEBI" id="CHEBI:18420"/>
        <label>1</label>
    </ligand>
</feature>
<feature type="binding site" evidence="1">
    <location>
        <position position="226"/>
    </location>
    <ligand>
        <name>Mg(2+)</name>
        <dbReference type="ChEBI" id="CHEBI:18420"/>
        <label>2</label>
    </ligand>
</feature>
<protein>
    <recommendedName>
        <fullName evidence="1">Anthranilate phosphoribosyltransferase</fullName>
        <ecNumber evidence="1">2.4.2.18</ecNumber>
    </recommendedName>
</protein>
<accession>C0RJB0</accession>